<sequence>MIKNNCNNVNIYKYYLFSFKVYILPSNFKIWEAVSSMVSFKFLNLKPNNFLLFLLSRVAPRVLWVAPEPGFPTGILPFRTGKSSLRISRTSCIVNLASDTISL</sequence>
<feature type="chain" id="PRO_0000299697" description="Putative uncharacterized protein YOL150C">
    <location>
        <begin position="1"/>
        <end position="103"/>
    </location>
</feature>
<reference key="1">
    <citation type="journal article" date="1997" name="Nature">
        <title>The nucleotide sequence of Saccharomyces cerevisiae chromosome XV.</title>
        <authorList>
            <person name="Dujon B."/>
            <person name="Albermann K."/>
            <person name="Aldea M."/>
            <person name="Alexandraki D."/>
            <person name="Ansorge W."/>
            <person name="Arino J."/>
            <person name="Benes V."/>
            <person name="Bohn C."/>
            <person name="Bolotin-Fukuhara M."/>
            <person name="Bordonne R."/>
            <person name="Boyer J."/>
            <person name="Camasses A."/>
            <person name="Casamayor A."/>
            <person name="Casas C."/>
            <person name="Cheret G."/>
            <person name="Cziepluch C."/>
            <person name="Daignan-Fornier B."/>
            <person name="Dang V.-D."/>
            <person name="de Haan M."/>
            <person name="Delius H."/>
            <person name="Durand P."/>
            <person name="Fairhead C."/>
            <person name="Feldmann H."/>
            <person name="Gaillon L."/>
            <person name="Galisson F."/>
            <person name="Gamo F.-J."/>
            <person name="Gancedo C."/>
            <person name="Goffeau A."/>
            <person name="Goulding S.E."/>
            <person name="Grivell L.A."/>
            <person name="Habbig B."/>
            <person name="Hand N.J."/>
            <person name="Hani J."/>
            <person name="Hattenhorst U."/>
            <person name="Hebling U."/>
            <person name="Hernando Y."/>
            <person name="Herrero E."/>
            <person name="Heumann K."/>
            <person name="Hiesel R."/>
            <person name="Hilger F."/>
            <person name="Hofmann B."/>
            <person name="Hollenberg C.P."/>
            <person name="Hughes B."/>
            <person name="Jauniaux J.-C."/>
            <person name="Kalogeropoulos A."/>
            <person name="Katsoulou C."/>
            <person name="Kordes E."/>
            <person name="Lafuente M.J."/>
            <person name="Landt O."/>
            <person name="Louis E.J."/>
            <person name="Maarse A.C."/>
            <person name="Madania A."/>
            <person name="Mannhaupt G."/>
            <person name="Marck C."/>
            <person name="Martin R.P."/>
            <person name="Mewes H.-W."/>
            <person name="Michaux G."/>
            <person name="Paces V."/>
            <person name="Parle-McDermott A.G."/>
            <person name="Pearson B.M."/>
            <person name="Perrin A."/>
            <person name="Pettersson B."/>
            <person name="Poch O."/>
            <person name="Pohl T.M."/>
            <person name="Poirey R."/>
            <person name="Portetelle D."/>
            <person name="Pujol A."/>
            <person name="Purnelle B."/>
            <person name="Ramezani Rad M."/>
            <person name="Rechmann S."/>
            <person name="Schwager C."/>
            <person name="Schweizer M."/>
            <person name="Sor F."/>
            <person name="Sterky F."/>
            <person name="Tarassov I.A."/>
            <person name="Teodoru C."/>
            <person name="Tettelin H."/>
            <person name="Thierry A."/>
            <person name="Tobiasch E."/>
            <person name="Tzermia M."/>
            <person name="Uhlen M."/>
            <person name="Unseld M."/>
            <person name="Valens M."/>
            <person name="Vandenbol M."/>
            <person name="Vetter I."/>
            <person name="Vlcek C."/>
            <person name="Voet M."/>
            <person name="Volckaert G."/>
            <person name="Voss H."/>
            <person name="Wambutt R."/>
            <person name="Wedler H."/>
            <person name="Wiemann S."/>
            <person name="Winsor B."/>
            <person name="Wolfe K.H."/>
            <person name="Zollner A."/>
            <person name="Zumstein E."/>
            <person name="Kleine K."/>
        </authorList>
    </citation>
    <scope>NUCLEOTIDE SEQUENCE [LARGE SCALE GENOMIC DNA]</scope>
    <source>
        <strain>ATCC 204508 / S288c</strain>
    </source>
</reference>
<reference key="2">
    <citation type="journal article" date="2014" name="G3 (Bethesda)">
        <title>The reference genome sequence of Saccharomyces cerevisiae: Then and now.</title>
        <authorList>
            <person name="Engel S.R."/>
            <person name="Dietrich F.S."/>
            <person name="Fisk D.G."/>
            <person name="Binkley G."/>
            <person name="Balakrishnan R."/>
            <person name="Costanzo M.C."/>
            <person name="Dwight S.S."/>
            <person name="Hitz B.C."/>
            <person name="Karra K."/>
            <person name="Nash R.S."/>
            <person name="Weng S."/>
            <person name="Wong E.D."/>
            <person name="Lloyd P."/>
            <person name="Skrzypek M.S."/>
            <person name="Miyasato S.R."/>
            <person name="Simison M."/>
            <person name="Cherry J.M."/>
        </authorList>
    </citation>
    <scope>GENOME REANNOTATION</scope>
    <source>
        <strain>ATCC 204508 / S288c</strain>
    </source>
</reference>
<reference key="3">
    <citation type="journal article" date="2007" name="Genome Res.">
        <title>Approaching a complete repository of sequence-verified protein-encoding clones for Saccharomyces cerevisiae.</title>
        <authorList>
            <person name="Hu Y."/>
            <person name="Rolfs A."/>
            <person name="Bhullar B."/>
            <person name="Murthy T.V.S."/>
            <person name="Zhu C."/>
            <person name="Berger M.F."/>
            <person name="Camargo A.A."/>
            <person name="Kelley F."/>
            <person name="McCarron S."/>
            <person name="Jepson D."/>
            <person name="Richardson A."/>
            <person name="Raphael J."/>
            <person name="Moreira D."/>
            <person name="Taycher E."/>
            <person name="Zuo D."/>
            <person name="Mohr S."/>
            <person name="Kane M.F."/>
            <person name="Williamson J."/>
            <person name="Simpson A.J.G."/>
            <person name="Bulyk M.L."/>
            <person name="Harlow E."/>
            <person name="Marsischky G."/>
            <person name="Kolodner R.D."/>
            <person name="LaBaer J."/>
        </authorList>
    </citation>
    <scope>NUCLEOTIDE SEQUENCE [GENOMIC DNA]</scope>
    <source>
        <strain>ATCC 204508 / S288c</strain>
    </source>
</reference>
<name>YO150_YEAST</name>
<evidence type="ECO:0000305" key="1"/>
<evidence type="ECO:0000305" key="2">
    <source>
    </source>
</evidence>
<proteinExistence type="uncertain"/>
<dbReference type="EMBL" id="Z74893">
    <property type="protein sequence ID" value="CAA99173.1"/>
    <property type="molecule type" value="Genomic_DNA"/>
</dbReference>
<dbReference type="EMBL" id="AY693317">
    <property type="protein sequence ID" value="AAT93336.1"/>
    <property type="molecule type" value="Genomic_DNA"/>
</dbReference>
<dbReference type="PIR" id="S66847">
    <property type="entry name" value="S66847"/>
</dbReference>
<dbReference type="DIP" id="DIP-3838N"/>
<dbReference type="IntAct" id="Q08293">
    <property type="interactions" value="2"/>
</dbReference>
<dbReference type="PaxDb" id="4932-YOL150C"/>
<dbReference type="EnsemblFungi" id="YOL150C_mRNA">
    <property type="protein sequence ID" value="YOL150C"/>
    <property type="gene ID" value="YOL150C"/>
</dbReference>
<dbReference type="AGR" id="SGD:S000005510"/>
<dbReference type="SGD" id="S000005510">
    <property type="gene designation" value="YOL150C"/>
</dbReference>
<dbReference type="HOGENOM" id="CLU_2265825_0_0_1"/>
<organism>
    <name type="scientific">Saccharomyces cerevisiae (strain ATCC 204508 / S288c)</name>
    <name type="common">Baker's yeast</name>
    <dbReference type="NCBI Taxonomy" id="559292"/>
    <lineage>
        <taxon>Eukaryota</taxon>
        <taxon>Fungi</taxon>
        <taxon>Dikarya</taxon>
        <taxon>Ascomycota</taxon>
        <taxon>Saccharomycotina</taxon>
        <taxon>Saccharomycetes</taxon>
        <taxon>Saccharomycetales</taxon>
        <taxon>Saccharomycetaceae</taxon>
        <taxon>Saccharomyces</taxon>
    </lineage>
</organism>
<comment type="miscellaneous">
    <text evidence="1">Partially overlaps GRE2.</text>
</comment>
<comment type="caution">
    <text evidence="2">Product of a dubious gene prediction unlikely to encode a functional protein. Because of that it is not part of the S.cerevisiae S288c complete/reference proteome set.</text>
</comment>
<gene>
    <name type="ordered locus">YOL150C</name>
    <name type="ORF">AOE103</name>
    <name type="ORF">O0448</name>
</gene>
<protein>
    <recommendedName>
        <fullName>Putative uncharacterized protein YOL150C</fullName>
    </recommendedName>
</protein>
<accession>Q08293</accession>